<accession>Q92F53</accession>
<protein>
    <recommendedName>
        <fullName evidence="1">33 kDa chaperonin</fullName>
    </recommendedName>
    <alternativeName>
        <fullName evidence="1">Heat shock protein 33 homolog</fullName>
        <shortName evidence="1">HSP33</shortName>
    </alternativeName>
</protein>
<dbReference type="EMBL" id="AL596164">
    <property type="protein sequence ID" value="CAC95487.1"/>
    <property type="molecule type" value="Genomic_DNA"/>
</dbReference>
<dbReference type="PIR" id="AG1464">
    <property type="entry name" value="AG1464"/>
</dbReference>
<dbReference type="RefSeq" id="WP_003760045.1">
    <property type="nucleotide sequence ID" value="NC_003212.1"/>
</dbReference>
<dbReference type="SMR" id="Q92F53"/>
<dbReference type="STRING" id="272626.gene:17564566"/>
<dbReference type="GeneID" id="93233689"/>
<dbReference type="KEGG" id="lin:lin0254"/>
<dbReference type="eggNOG" id="COG1281">
    <property type="taxonomic scope" value="Bacteria"/>
</dbReference>
<dbReference type="HOGENOM" id="CLU_054493_1_0_9"/>
<dbReference type="OrthoDB" id="9776534at2"/>
<dbReference type="Proteomes" id="UP000002513">
    <property type="component" value="Chromosome"/>
</dbReference>
<dbReference type="GO" id="GO:0005737">
    <property type="term" value="C:cytoplasm"/>
    <property type="evidence" value="ECO:0007669"/>
    <property type="project" value="UniProtKB-SubCell"/>
</dbReference>
<dbReference type="GO" id="GO:0044183">
    <property type="term" value="F:protein folding chaperone"/>
    <property type="evidence" value="ECO:0007669"/>
    <property type="project" value="TreeGrafter"/>
</dbReference>
<dbReference type="GO" id="GO:0051082">
    <property type="term" value="F:unfolded protein binding"/>
    <property type="evidence" value="ECO:0007669"/>
    <property type="project" value="UniProtKB-UniRule"/>
</dbReference>
<dbReference type="GO" id="GO:0042026">
    <property type="term" value="P:protein refolding"/>
    <property type="evidence" value="ECO:0007669"/>
    <property type="project" value="TreeGrafter"/>
</dbReference>
<dbReference type="CDD" id="cd00498">
    <property type="entry name" value="Hsp33"/>
    <property type="match status" value="1"/>
</dbReference>
<dbReference type="Gene3D" id="3.55.30.10">
    <property type="entry name" value="Hsp33 domain"/>
    <property type="match status" value="1"/>
</dbReference>
<dbReference type="Gene3D" id="3.90.1280.10">
    <property type="entry name" value="HSP33 redox switch-like"/>
    <property type="match status" value="1"/>
</dbReference>
<dbReference type="HAMAP" id="MF_00117">
    <property type="entry name" value="HslO"/>
    <property type="match status" value="1"/>
</dbReference>
<dbReference type="InterPro" id="IPR000397">
    <property type="entry name" value="Heat_shock_Hsp33"/>
</dbReference>
<dbReference type="InterPro" id="IPR016154">
    <property type="entry name" value="Heat_shock_Hsp33_C"/>
</dbReference>
<dbReference type="InterPro" id="IPR016153">
    <property type="entry name" value="Heat_shock_Hsp33_N"/>
</dbReference>
<dbReference type="NCBIfam" id="NF001033">
    <property type="entry name" value="PRK00114.1"/>
    <property type="match status" value="1"/>
</dbReference>
<dbReference type="PANTHER" id="PTHR30111">
    <property type="entry name" value="33 KDA CHAPERONIN"/>
    <property type="match status" value="1"/>
</dbReference>
<dbReference type="PANTHER" id="PTHR30111:SF1">
    <property type="entry name" value="33 KDA CHAPERONIN"/>
    <property type="match status" value="1"/>
</dbReference>
<dbReference type="Pfam" id="PF01430">
    <property type="entry name" value="HSP33"/>
    <property type="match status" value="1"/>
</dbReference>
<dbReference type="PIRSF" id="PIRSF005261">
    <property type="entry name" value="Heat_shock_Hsp33"/>
    <property type="match status" value="1"/>
</dbReference>
<dbReference type="SUPFAM" id="SSF64397">
    <property type="entry name" value="Hsp33 domain"/>
    <property type="match status" value="1"/>
</dbReference>
<dbReference type="SUPFAM" id="SSF118352">
    <property type="entry name" value="HSP33 redox switch-like"/>
    <property type="match status" value="1"/>
</dbReference>
<name>HSLO_LISIN</name>
<gene>
    <name evidence="1" type="primary">hslO</name>
    <name type="ordered locus">lin0254</name>
</gene>
<feature type="chain" id="PRO_0000192183" description="33 kDa chaperonin">
    <location>
        <begin position="1"/>
        <end position="294"/>
    </location>
</feature>
<feature type="disulfide bond" description="Redox-active" evidence="1">
    <location>
        <begin position="239"/>
        <end position="241"/>
    </location>
</feature>
<feature type="disulfide bond" description="Redox-active" evidence="1">
    <location>
        <begin position="272"/>
        <end position="275"/>
    </location>
</feature>
<organism>
    <name type="scientific">Listeria innocua serovar 6a (strain ATCC BAA-680 / CLIP 11262)</name>
    <dbReference type="NCBI Taxonomy" id="272626"/>
    <lineage>
        <taxon>Bacteria</taxon>
        <taxon>Bacillati</taxon>
        <taxon>Bacillota</taxon>
        <taxon>Bacilli</taxon>
        <taxon>Bacillales</taxon>
        <taxon>Listeriaceae</taxon>
        <taxon>Listeria</taxon>
    </lineage>
</organism>
<reference key="1">
    <citation type="journal article" date="2001" name="Science">
        <title>Comparative genomics of Listeria species.</title>
        <authorList>
            <person name="Glaser P."/>
            <person name="Frangeul L."/>
            <person name="Buchrieser C."/>
            <person name="Rusniok C."/>
            <person name="Amend A."/>
            <person name="Baquero F."/>
            <person name="Berche P."/>
            <person name="Bloecker H."/>
            <person name="Brandt P."/>
            <person name="Chakraborty T."/>
            <person name="Charbit A."/>
            <person name="Chetouani F."/>
            <person name="Couve E."/>
            <person name="de Daruvar A."/>
            <person name="Dehoux P."/>
            <person name="Domann E."/>
            <person name="Dominguez-Bernal G."/>
            <person name="Duchaud E."/>
            <person name="Durant L."/>
            <person name="Dussurget O."/>
            <person name="Entian K.-D."/>
            <person name="Fsihi H."/>
            <person name="Garcia-del Portillo F."/>
            <person name="Garrido P."/>
            <person name="Gautier L."/>
            <person name="Goebel W."/>
            <person name="Gomez-Lopez N."/>
            <person name="Hain T."/>
            <person name="Hauf J."/>
            <person name="Jackson D."/>
            <person name="Jones L.-M."/>
            <person name="Kaerst U."/>
            <person name="Kreft J."/>
            <person name="Kuhn M."/>
            <person name="Kunst F."/>
            <person name="Kurapkat G."/>
            <person name="Madueno E."/>
            <person name="Maitournam A."/>
            <person name="Mata Vicente J."/>
            <person name="Ng E."/>
            <person name="Nedjari H."/>
            <person name="Nordsiek G."/>
            <person name="Novella S."/>
            <person name="de Pablos B."/>
            <person name="Perez-Diaz J.-C."/>
            <person name="Purcell R."/>
            <person name="Remmel B."/>
            <person name="Rose M."/>
            <person name="Schlueter T."/>
            <person name="Simoes N."/>
            <person name="Tierrez A."/>
            <person name="Vazquez-Boland J.-A."/>
            <person name="Voss H."/>
            <person name="Wehland J."/>
            <person name="Cossart P."/>
        </authorList>
    </citation>
    <scope>NUCLEOTIDE SEQUENCE [LARGE SCALE GENOMIC DNA]</scope>
    <source>
        <strain>ATCC BAA-680 / CLIP 11262</strain>
    </source>
</reference>
<comment type="function">
    <text evidence="1">Redox regulated molecular chaperone. Protects both thermally unfolding and oxidatively damaged proteins from irreversible aggregation. Plays an important role in the bacterial defense system toward oxidative stress.</text>
</comment>
<comment type="subcellular location">
    <subcellularLocation>
        <location evidence="1">Cytoplasm</location>
    </subcellularLocation>
</comment>
<comment type="PTM">
    <text evidence="1">Under oxidizing conditions two disulfide bonds are formed involving the reactive cysteines. Under reducing conditions zinc is bound to the reactive cysteines and the protein is inactive.</text>
</comment>
<comment type="similarity">
    <text evidence="1">Belongs to the HSP33 family.</text>
</comment>
<sequence length="294" mass="31927">MSDYLVKALAYDGMARVYAAVTTETIKEAQRRHDTWSVSSAALGRTMTGTLFLGAMQKEDQKITVKIEGDGPIGPIVADSNAQGQIRGYVTNPHVHFSELNEAGKLDVRRGVGTSGMLSVVKDLGFGENFTGQTPIVSGEIGEDFTYYLATSEQINSSVGVGVLVNPDDTIEAAGGFMLQLLPGATDEIIDEIEKNLSTLPTVSRMIEAGETPETILAKLAGGEDKLQILEKIPVAFECNCSKERFGSAIISLGKEEIRSMIEEDHGAEAECHFCRNTYDFSEEELEKLYEEAK</sequence>
<keyword id="KW-0143">Chaperone</keyword>
<keyword id="KW-0963">Cytoplasm</keyword>
<keyword id="KW-1015">Disulfide bond</keyword>
<keyword id="KW-0676">Redox-active center</keyword>
<keyword id="KW-0862">Zinc</keyword>
<proteinExistence type="inferred from homology"/>
<evidence type="ECO:0000255" key="1">
    <source>
        <dbReference type="HAMAP-Rule" id="MF_00117"/>
    </source>
</evidence>